<name>PETG_GLOVI</name>
<organism>
    <name type="scientific">Gloeobacter violaceus (strain ATCC 29082 / PCC 7421)</name>
    <dbReference type="NCBI Taxonomy" id="251221"/>
    <lineage>
        <taxon>Bacteria</taxon>
        <taxon>Bacillati</taxon>
        <taxon>Cyanobacteriota</taxon>
        <taxon>Cyanophyceae</taxon>
        <taxon>Gloeobacterales</taxon>
        <taxon>Gloeobacteraceae</taxon>
        <taxon>Gloeobacter</taxon>
    </lineage>
</organism>
<protein>
    <recommendedName>
        <fullName evidence="1">Cytochrome b6-f complex subunit 5</fullName>
    </recommendedName>
    <alternativeName>
        <fullName evidence="1">Cytochrome b6-f complex subunit PetG</fullName>
    </alternativeName>
    <alternativeName>
        <fullName evidence="1">Cytochrome b6-f complex subunit V</fullName>
    </alternativeName>
</protein>
<reference key="1">
    <citation type="journal article" date="2003" name="DNA Res.">
        <title>Complete genome structure of Gloeobacter violaceus PCC 7421, a cyanobacterium that lacks thylakoids.</title>
        <authorList>
            <person name="Nakamura Y."/>
            <person name="Kaneko T."/>
            <person name="Sato S."/>
            <person name="Mimuro M."/>
            <person name="Miyashita H."/>
            <person name="Tsuchiya T."/>
            <person name="Sasamoto S."/>
            <person name="Watanabe A."/>
            <person name="Kawashima K."/>
            <person name="Kishida Y."/>
            <person name="Kiyokawa C."/>
            <person name="Kohara M."/>
            <person name="Matsumoto M."/>
            <person name="Matsuno A."/>
            <person name="Nakazaki N."/>
            <person name="Shimpo S."/>
            <person name="Takeuchi C."/>
            <person name="Yamada M."/>
            <person name="Tabata S."/>
        </authorList>
    </citation>
    <scope>NUCLEOTIDE SEQUENCE [LARGE SCALE GENOMIC DNA]</scope>
    <source>
        <strain>ATCC 29082 / PCC 7421</strain>
    </source>
</reference>
<comment type="function">
    <text evidence="1">Component of the cytochrome b6-f complex, which mediates electron transfer between photosystem II (PSII) and photosystem I (PSI), cyclic electron flow around PSI, and state transitions. PetG is required for either the stability or assembly of the cytochrome b6-f complex.</text>
</comment>
<comment type="subunit">
    <text evidence="1">The 4 large subunits of the cytochrome b6-f complex are cytochrome b6, subunit IV (17 kDa polypeptide, PetD), cytochrome f and the Rieske protein, while the 4 small subunits are PetG, PetL, PetM and PetN. The complex functions as a dimer.</text>
</comment>
<comment type="subcellular location">
    <subcellularLocation>
        <location evidence="1">Cell inner membrane</location>
        <topology evidence="1">Single-pass membrane protein</topology>
    </subcellularLocation>
</comment>
<comment type="similarity">
    <text evidence="1">Belongs to the PetG family.</text>
</comment>
<feature type="chain" id="PRO_0000216410" description="Cytochrome b6-f complex subunit 5">
    <location>
        <begin position="1"/>
        <end position="40"/>
    </location>
</feature>
<feature type="transmembrane region" description="Helical" evidence="1">
    <location>
        <begin position="5"/>
        <end position="25"/>
    </location>
</feature>
<dbReference type="EMBL" id="BA000045">
    <property type="protein sequence ID" value="BAC88452.1"/>
    <property type="molecule type" value="Genomic_DNA"/>
</dbReference>
<dbReference type="RefSeq" id="NP_923457.1">
    <property type="nucleotide sequence ID" value="NC_005125.1"/>
</dbReference>
<dbReference type="RefSeq" id="WP_011140514.1">
    <property type="nucleotide sequence ID" value="NC_005125.1"/>
</dbReference>
<dbReference type="SMR" id="Q7NNA0"/>
<dbReference type="STRING" id="251221.gene:10757983"/>
<dbReference type="EnsemblBacteria" id="BAC88452">
    <property type="protein sequence ID" value="BAC88452"/>
    <property type="gene ID" value="BAC88452"/>
</dbReference>
<dbReference type="KEGG" id="gvi:gsl0511"/>
<dbReference type="HOGENOM" id="CLU_216962_0_0_3"/>
<dbReference type="InParanoid" id="Q7NNA0"/>
<dbReference type="OrthoDB" id="428448at2"/>
<dbReference type="PhylomeDB" id="Q7NNA0"/>
<dbReference type="Proteomes" id="UP000000557">
    <property type="component" value="Chromosome"/>
</dbReference>
<dbReference type="GO" id="GO:0009512">
    <property type="term" value="C:cytochrome b6f complex"/>
    <property type="evidence" value="ECO:0007669"/>
    <property type="project" value="InterPro"/>
</dbReference>
<dbReference type="GO" id="GO:0005886">
    <property type="term" value="C:plasma membrane"/>
    <property type="evidence" value="ECO:0007669"/>
    <property type="project" value="UniProtKB-SubCell"/>
</dbReference>
<dbReference type="GO" id="GO:0045158">
    <property type="term" value="F:electron transporter, transferring electrons within cytochrome b6/f complex of photosystem II activity"/>
    <property type="evidence" value="ECO:0007669"/>
    <property type="project" value="UniProtKB-UniRule"/>
</dbReference>
<dbReference type="GO" id="GO:0017004">
    <property type="term" value="P:cytochrome complex assembly"/>
    <property type="evidence" value="ECO:0007669"/>
    <property type="project" value="UniProtKB-UniRule"/>
</dbReference>
<dbReference type="GO" id="GO:0015979">
    <property type="term" value="P:photosynthesis"/>
    <property type="evidence" value="ECO:0007669"/>
    <property type="project" value="UniProtKB-KW"/>
</dbReference>
<dbReference type="HAMAP" id="MF_00432">
    <property type="entry name" value="Cytb6_f_PetG"/>
    <property type="match status" value="1"/>
</dbReference>
<dbReference type="InterPro" id="IPR003683">
    <property type="entry name" value="Cyt_6/f_cplx_su5"/>
</dbReference>
<dbReference type="InterPro" id="IPR036099">
    <property type="entry name" value="Cyt_6/f_cplx_su5_sf"/>
</dbReference>
<dbReference type="NCBIfam" id="NF001907">
    <property type="entry name" value="PRK00665.1"/>
    <property type="match status" value="1"/>
</dbReference>
<dbReference type="Pfam" id="PF02529">
    <property type="entry name" value="PetG"/>
    <property type="match status" value="1"/>
</dbReference>
<dbReference type="PIRSF" id="PIRSF000034">
    <property type="entry name" value="Cyt_b6-f_V"/>
    <property type="match status" value="1"/>
</dbReference>
<dbReference type="SUPFAM" id="SSF103446">
    <property type="entry name" value="PetG subunit of the cytochrome b6f complex"/>
    <property type="match status" value="1"/>
</dbReference>
<keyword id="KW-0997">Cell inner membrane</keyword>
<keyword id="KW-1003">Cell membrane</keyword>
<keyword id="KW-0249">Electron transport</keyword>
<keyword id="KW-0472">Membrane</keyword>
<keyword id="KW-0602">Photosynthesis</keyword>
<keyword id="KW-1185">Reference proteome</keyword>
<keyword id="KW-0812">Transmembrane</keyword>
<keyword id="KW-1133">Transmembrane helix</keyword>
<keyword id="KW-0813">Transport</keyword>
<proteinExistence type="inferred from homology"/>
<gene>
    <name evidence="1" type="primary">petG</name>
    <name type="ordered locus">gsl0511</name>
</gene>
<accession>Q7NNA0</accession>
<evidence type="ECO:0000255" key="1">
    <source>
        <dbReference type="HAMAP-Rule" id="MF_00432"/>
    </source>
</evidence>
<sequence>MIEPILLGMVLGFVPVTIAGLLVAAWLQYKQGNPSGLGEK</sequence>